<gene>
    <name type="ordered locus">TP_0376</name>
</gene>
<evidence type="ECO:0000255" key="1"/>
<accession>O83391</accession>
<reference key="1">
    <citation type="journal article" date="1998" name="Science">
        <title>Complete genome sequence of Treponema pallidum, the syphilis spirochete.</title>
        <authorList>
            <person name="Fraser C.M."/>
            <person name="Norris S.J."/>
            <person name="Weinstock G.M."/>
            <person name="White O."/>
            <person name="Sutton G.G."/>
            <person name="Dodson R.J."/>
            <person name="Gwinn M.L."/>
            <person name="Hickey E.K."/>
            <person name="Clayton R.A."/>
            <person name="Ketchum K.A."/>
            <person name="Sodergren E."/>
            <person name="Hardham J.M."/>
            <person name="McLeod M.P."/>
            <person name="Salzberg S.L."/>
            <person name="Peterson J.D."/>
            <person name="Khalak H.G."/>
            <person name="Richardson D.L."/>
            <person name="Howell J.K."/>
            <person name="Chidambaram M."/>
            <person name="Utterback T.R."/>
            <person name="McDonald L.A."/>
            <person name="Artiach P."/>
            <person name="Bowman C."/>
            <person name="Cotton M.D."/>
            <person name="Fujii C."/>
            <person name="Garland S.A."/>
            <person name="Hatch B."/>
            <person name="Horst K."/>
            <person name="Roberts K.M."/>
            <person name="Sandusky M."/>
            <person name="Weidman J.F."/>
            <person name="Smith H.O."/>
            <person name="Venter J.C."/>
        </authorList>
    </citation>
    <scope>NUCLEOTIDE SEQUENCE [LARGE SCALE GENOMIC DNA]</scope>
    <source>
        <strain>Nichols</strain>
    </source>
</reference>
<dbReference type="EMBL" id="AE000520">
    <property type="protein sequence ID" value="AAC65381.1"/>
    <property type="molecule type" value="Genomic_DNA"/>
</dbReference>
<dbReference type="PIR" id="B71330">
    <property type="entry name" value="B71330"/>
</dbReference>
<dbReference type="RefSeq" id="WP_010881824.1">
    <property type="nucleotide sequence ID" value="NC_000919.1"/>
</dbReference>
<dbReference type="SMR" id="O83391"/>
<dbReference type="IntAct" id="O83391">
    <property type="interactions" value="8"/>
</dbReference>
<dbReference type="STRING" id="243276.TP_0376"/>
<dbReference type="EnsemblBacteria" id="AAC65381">
    <property type="protein sequence ID" value="AAC65381"/>
    <property type="gene ID" value="TP_0376"/>
</dbReference>
<dbReference type="KEGG" id="tpa:TP_0376"/>
<dbReference type="HOGENOM" id="CLU_072078_0_0_12"/>
<dbReference type="Proteomes" id="UP000000811">
    <property type="component" value="Chromosome"/>
</dbReference>
<name>Y376_TREPA</name>
<feature type="signal peptide" evidence="1">
    <location>
        <begin position="1"/>
        <end position="28"/>
    </location>
</feature>
<feature type="chain" id="PRO_0000014247" description="Uncharacterized protein TP_0376">
    <location>
        <begin position="29"/>
        <end position="301"/>
    </location>
</feature>
<protein>
    <recommendedName>
        <fullName>Uncharacterized protein TP_0376</fullName>
    </recommendedName>
</protein>
<organism>
    <name type="scientific">Treponema pallidum (strain Nichols)</name>
    <dbReference type="NCBI Taxonomy" id="243276"/>
    <lineage>
        <taxon>Bacteria</taxon>
        <taxon>Pseudomonadati</taxon>
        <taxon>Spirochaetota</taxon>
        <taxon>Spirochaetia</taxon>
        <taxon>Spirochaetales</taxon>
        <taxon>Treponemataceae</taxon>
        <taxon>Treponema</taxon>
    </lineage>
</organism>
<keyword id="KW-1185">Reference proteome</keyword>
<keyword id="KW-0732">Signal</keyword>
<sequence>MFFREDKSVAFRLRSAALSGCATGQSDAVTDPLSVLEVSQTETREALMLFVSYNETGASVTIFTPELVARLSKSYRFLRVEAPHSAYTLSPEARERNRLLFSEYEVDGLPFLVLQSAQGDAYFAQRIHSTLSSEQELWALIRSADASRKKVLAARDRIAQTEAAEKAIAIDAFLKTVRYPRSARYDALRKEALQADHENVSGLHGDYMFHLARRRAEKFIKQENLVAAGNAYKDLAQSPFLSASQKQEAWYLTAYTYALSEKVSTEDVVACLRKAVAAHPHAARVAQIKQTIKKLLTERGI</sequence>
<proteinExistence type="inferred from homology"/>